<name>NODC_RHISM</name>
<accession>P04679</accession>
<protein>
    <recommendedName>
        <fullName>N-acetylglucosaminyltransferase</fullName>
        <ecNumber>2.4.1.-</ecNumber>
    </recommendedName>
    <alternativeName>
        <fullName>Nodulation protein C</fullName>
    </alternativeName>
</protein>
<keyword id="KW-1003">Cell membrane</keyword>
<keyword id="KW-0328">Glycosyltransferase</keyword>
<keyword id="KW-0472">Membrane</keyword>
<keyword id="KW-0536">Nodulation</keyword>
<keyword id="KW-0614">Plasmid</keyword>
<keyword id="KW-0808">Transferase</keyword>
<geneLocation type="plasmid">
    <name>sym</name>
</geneLocation>
<reference key="1">
    <citation type="journal article" date="1985" name="Mol. Gen. Genet.">
        <title>Identification and cloning of nodulation genes from the wide host range Rhizobium strain MPIK3030.</title>
        <authorList>
            <person name="Bachem C.W.B."/>
            <person name="Kondorosi E."/>
            <person name="Banfalvi Z."/>
            <person name="Horvath B."/>
            <person name="Kondorosi A."/>
            <person name="Schell J."/>
        </authorList>
    </citation>
    <scope>NUCLEOTIDE SEQUENCE [GENOMIC DNA]</scope>
</reference>
<proteinExistence type="inferred from homology"/>
<dbReference type="EC" id="2.4.1.-"/>
<dbReference type="EMBL" id="X02476">
    <property type="protein sequence ID" value="CAA26311.1"/>
    <property type="molecule type" value="Genomic_DNA"/>
</dbReference>
<dbReference type="EMBL" id="X02475">
    <property type="protein sequence ID" value="CAA26310.1"/>
    <property type="molecule type" value="Genomic_DNA"/>
</dbReference>
<dbReference type="PIR" id="S07304">
    <property type="entry name" value="S07304"/>
</dbReference>
<dbReference type="PIR" id="S09522">
    <property type="entry name" value="S09522"/>
</dbReference>
<dbReference type="GO" id="GO:0005886">
    <property type="term" value="C:plasma membrane"/>
    <property type="evidence" value="ECO:0007669"/>
    <property type="project" value="UniProtKB-SubCell"/>
</dbReference>
<dbReference type="GO" id="GO:0050501">
    <property type="term" value="F:hyaluronan synthase activity"/>
    <property type="evidence" value="ECO:0007669"/>
    <property type="project" value="TreeGrafter"/>
</dbReference>
<dbReference type="GO" id="GO:0085029">
    <property type="term" value="P:extracellular matrix assembly"/>
    <property type="evidence" value="ECO:0007669"/>
    <property type="project" value="TreeGrafter"/>
</dbReference>
<dbReference type="GO" id="GO:0030213">
    <property type="term" value="P:hyaluronan biosynthetic process"/>
    <property type="evidence" value="ECO:0007669"/>
    <property type="project" value="TreeGrafter"/>
</dbReference>
<dbReference type="Gene3D" id="3.90.550.10">
    <property type="entry name" value="Spore Coat Polysaccharide Biosynthesis Protein SpsA, Chain A"/>
    <property type="match status" value="1"/>
</dbReference>
<dbReference type="InterPro" id="IPR001173">
    <property type="entry name" value="Glyco_trans_2-like"/>
</dbReference>
<dbReference type="InterPro" id="IPR029044">
    <property type="entry name" value="Nucleotide-diphossugar_trans"/>
</dbReference>
<dbReference type="PANTHER" id="PTHR22913">
    <property type="entry name" value="HYALURONAN SYNTHASE"/>
    <property type="match status" value="1"/>
</dbReference>
<dbReference type="PANTHER" id="PTHR22913:SF12">
    <property type="entry name" value="MANNURONAN SYNTHASE"/>
    <property type="match status" value="1"/>
</dbReference>
<dbReference type="Pfam" id="PF13632">
    <property type="entry name" value="Glyco_trans_2_3"/>
    <property type="match status" value="1"/>
</dbReference>
<dbReference type="Pfam" id="PF00535">
    <property type="entry name" value="Glycos_transf_2"/>
    <property type="match status" value="1"/>
</dbReference>
<dbReference type="SUPFAM" id="SSF53448">
    <property type="entry name" value="Nucleotide-diphospho-sugar transferases"/>
    <property type="match status" value="1"/>
</dbReference>
<gene>
    <name type="primary">nodC</name>
</gene>
<feature type="chain" id="PRO_0000197194" description="N-acetylglucosaminyltransferase">
    <location>
        <begin position="1" status="less than"/>
        <end position="196" status="greater than"/>
    </location>
</feature>
<feature type="non-consecutive residues" evidence="1">
    <location>
        <begin position="97"/>
        <end position="98"/>
    </location>
</feature>
<feature type="non-terminal residue">
    <location>
        <position position="1"/>
    </location>
</feature>
<feature type="non-terminal residue">
    <location>
        <position position="196"/>
    </location>
</feature>
<evidence type="ECO:0000305" key="1"/>
<sequence length="196" mass="21316">GSARVSACVASIAKQDYAGELRVYVVDDGSGNRNAIIPVHDHYACDPRFRFILMPKNVGKRKASIVAIGKSSGDLVLNVDSDTTMRRRVASKLASKSRIREDAPTILMRNAGFRTEYVPEAIAETVVPNSMNAYLRQQRRWARSSFADTLAVLLLLGLDRYLTLDEIGGNLGPLLLALSVVSGLAQLALTATVPWS</sequence>
<organism>
    <name type="scientific">Rhizobium sp. (strain MPIK3030)</name>
    <dbReference type="NCBI Taxonomy" id="393"/>
    <lineage>
        <taxon>Bacteria</taxon>
        <taxon>Pseudomonadati</taxon>
        <taxon>Pseudomonadota</taxon>
        <taxon>Alphaproteobacteria</taxon>
        <taxon>Hyphomicrobiales</taxon>
        <taxon>Rhizobiaceae</taxon>
        <taxon>Rhizobium/Agrobacterium group</taxon>
        <taxon>Rhizobium</taxon>
    </lineage>
</organism>
<comment type="function">
    <text>Involved in the synthesis of Nod factor, a sulfated N-acyl-beta-1,4-tetrasaccharide of N-acetylglucosamine which initiates a series of events in the host plant species leading eventually to nodulation.</text>
</comment>
<comment type="subcellular location">
    <subcellularLocation>
        <location evidence="1">Cell membrane</location>
        <topology evidence="1">Peripheral membrane protein</topology>
    </subcellularLocation>
</comment>
<comment type="similarity">
    <text evidence="1">Belongs to the NodC/HAS family.</text>
</comment>